<comment type="function">
    <text evidence="1 2">Subunit 8, of the mitochondrial membrane ATP synthase complex (F(1)F(0) ATP synthase or Complex V) that produces ATP from ADP in the presence of a proton gradient across the membrane which is generated by electron transport complexes of the respiratory chain. ATP synthase complex consist of a soluble F(1) head domain - the catalytic core - and a membrane F(1) domain - the membrane proton channel. These two domains are linked by a central stalk rotating inside the F(1) region and a stationary peripheral stalk. During catalysis, ATP synthesis in the catalytic domain of F(1) is coupled via a rotary mechanism of the central stalk subunits to proton translocation (By similarity). In vivo, can only synthesize ATP although its ATP hydrolase activity can be activated artificially in vitro (By similarity). Part of the complex F(0) domain (By similarity).</text>
</comment>
<comment type="subunit">
    <text evidence="1">Component of the ATP synthase complex composed at least of ATP5F1A/subunit alpha, ATP5F1B/subunit beta, ATP5MC1/subunit c (homooctomer), MT-ATP6/subunit a, MT-ATP8/subunit 8, ATP5ME/subunit e, ATP5MF/subunit f, ATP5MG/subunit g, ATP5MK/subunit k, ATP5MJ/subunit j, ATP5F1C/subunit gamma, ATP5F1D/subunit delta, ATP5F1E/subunit epsilon, ATP5PF/subunit F6, ATP5PB/subunit b, ATP5PD/subunit d, ATP5PO/subunit OSCP. ATP synthase complex consists of a soluble F(1) head domain (subunits alpha(3) and beta(3)) - the catalytic core - and a membrane F(0) domain - the membrane proton channel (subunits c, a, 8, e, f, g, k and j). These two domains are linked by a central stalk (subunits gamma, delta, and epsilon) rotating inside the F1 region and a stationary peripheral stalk (subunits F6, b, d, and OSCP).</text>
</comment>
<comment type="subcellular location">
    <subcellularLocation>
        <location>Mitochondrion membrane</location>
        <topology>Single-pass membrane protein</topology>
    </subcellularLocation>
</comment>
<comment type="similarity">
    <text evidence="5">Belongs to the ATPase protein 8 family.</text>
</comment>
<gene>
    <name evidence="1" type="primary">MT-ATP8</name>
    <name type="synonym">ATP8</name>
    <name type="synonym">ATPASE8</name>
    <name type="synonym">MTATP8</name>
</gene>
<sequence>MPQLNPNPWFFIMLLSWLTFSLIIQPKLLSFTPTNPPSNKTTTHTKTTPWTWPWT</sequence>
<name>ATP8_CHAPE</name>
<reference key="1">
    <citation type="journal article" date="1999" name="Mol. Biol. Evol.">
        <title>Phylogenetic relationships of the enigmatic hoatzin (Opisthocomus hoazin) resolved using mitochondrial and nuclear gene sequences.</title>
        <authorList>
            <person name="Hughes J.M."/>
            <person name="Baker A.J."/>
        </authorList>
    </citation>
    <scope>NUCLEOTIDE SEQUENCE [GENOMIC DNA]</scope>
</reference>
<protein>
    <recommendedName>
        <fullName evidence="1">ATP synthase F(0) complex subunit 8</fullName>
    </recommendedName>
    <alternativeName>
        <fullName>A6L</fullName>
    </alternativeName>
    <alternativeName>
        <fullName>F-ATPase subunit 8</fullName>
    </alternativeName>
</protein>
<geneLocation type="mitochondrion"/>
<feature type="chain" id="PRO_0000195507" description="ATP synthase F(0) complex subunit 8">
    <location>
        <begin position="1"/>
        <end position="55"/>
    </location>
</feature>
<feature type="transmembrane region" description="Helical" evidence="3">
    <location>
        <begin position="7"/>
        <end position="24"/>
    </location>
</feature>
<feature type="region of interest" description="Disordered" evidence="4">
    <location>
        <begin position="35"/>
        <end position="55"/>
    </location>
</feature>
<feature type="compositionally biased region" description="Low complexity" evidence="4">
    <location>
        <begin position="37"/>
        <end position="55"/>
    </location>
</feature>
<dbReference type="EMBL" id="AF168026">
    <property type="protein sequence ID" value="AAD56454.1"/>
    <property type="molecule type" value="Genomic_DNA"/>
</dbReference>
<dbReference type="SMR" id="Q9TBJ9"/>
<dbReference type="GO" id="GO:0031966">
    <property type="term" value="C:mitochondrial membrane"/>
    <property type="evidence" value="ECO:0007669"/>
    <property type="project" value="UniProtKB-SubCell"/>
</dbReference>
<dbReference type="GO" id="GO:0045259">
    <property type="term" value="C:proton-transporting ATP synthase complex"/>
    <property type="evidence" value="ECO:0007669"/>
    <property type="project" value="UniProtKB-KW"/>
</dbReference>
<dbReference type="GO" id="GO:0015078">
    <property type="term" value="F:proton transmembrane transporter activity"/>
    <property type="evidence" value="ECO:0007669"/>
    <property type="project" value="InterPro"/>
</dbReference>
<dbReference type="GO" id="GO:0015986">
    <property type="term" value="P:proton motive force-driven ATP synthesis"/>
    <property type="evidence" value="ECO:0007669"/>
    <property type="project" value="InterPro"/>
</dbReference>
<dbReference type="InterPro" id="IPR001421">
    <property type="entry name" value="ATP8_metazoa"/>
</dbReference>
<dbReference type="InterPro" id="IPR050635">
    <property type="entry name" value="ATPase_protein_8"/>
</dbReference>
<dbReference type="PANTHER" id="PTHR39937">
    <property type="entry name" value="ATP SYNTHASE PROTEIN 8"/>
    <property type="match status" value="1"/>
</dbReference>
<dbReference type="PANTHER" id="PTHR39937:SF1">
    <property type="entry name" value="ATP SYNTHASE PROTEIN 8"/>
    <property type="match status" value="1"/>
</dbReference>
<dbReference type="Pfam" id="PF00895">
    <property type="entry name" value="ATP-synt_8"/>
    <property type="match status" value="1"/>
</dbReference>
<accession>Q9TBJ9</accession>
<keyword id="KW-0066">ATP synthesis</keyword>
<keyword id="KW-0138">CF(0)</keyword>
<keyword id="KW-0375">Hydrogen ion transport</keyword>
<keyword id="KW-0406">Ion transport</keyword>
<keyword id="KW-0472">Membrane</keyword>
<keyword id="KW-0496">Mitochondrion</keyword>
<keyword id="KW-0812">Transmembrane</keyword>
<keyword id="KW-1133">Transmembrane helix</keyword>
<keyword id="KW-0813">Transport</keyword>
<organism>
    <name type="scientific">Chaetura pelagica</name>
    <name type="common">Chimney swift</name>
    <name type="synonym">Hirundo pelagica</name>
    <dbReference type="NCBI Taxonomy" id="8897"/>
    <lineage>
        <taxon>Eukaryota</taxon>
        <taxon>Metazoa</taxon>
        <taxon>Chordata</taxon>
        <taxon>Craniata</taxon>
        <taxon>Vertebrata</taxon>
        <taxon>Euteleostomi</taxon>
        <taxon>Archelosauria</taxon>
        <taxon>Archosauria</taxon>
        <taxon>Dinosauria</taxon>
        <taxon>Saurischia</taxon>
        <taxon>Theropoda</taxon>
        <taxon>Coelurosauria</taxon>
        <taxon>Aves</taxon>
        <taxon>Neognathae</taxon>
        <taxon>Neoaves</taxon>
        <taxon>Strisores</taxon>
        <taxon>Apodiformes</taxon>
        <taxon>Apodidae</taxon>
        <taxon>Apodinae</taxon>
        <taxon>Chaetura</taxon>
    </lineage>
</organism>
<evidence type="ECO:0000250" key="1">
    <source>
        <dbReference type="UniProtKB" id="P03928"/>
    </source>
</evidence>
<evidence type="ECO:0000250" key="2">
    <source>
        <dbReference type="UniProtKB" id="P19483"/>
    </source>
</evidence>
<evidence type="ECO:0000255" key="3"/>
<evidence type="ECO:0000256" key="4">
    <source>
        <dbReference type="SAM" id="MobiDB-lite"/>
    </source>
</evidence>
<evidence type="ECO:0000305" key="5"/>
<proteinExistence type="inferred from homology"/>